<organism>
    <name type="scientific">Human herpesvirus 2 (strain HG52)</name>
    <name type="common">HHV-2</name>
    <name type="synonym">Human herpes simplex virus 2</name>
    <dbReference type="NCBI Taxonomy" id="10315"/>
    <lineage>
        <taxon>Viruses</taxon>
        <taxon>Duplodnaviria</taxon>
        <taxon>Heunggongvirae</taxon>
        <taxon>Peploviricota</taxon>
        <taxon>Herviviricetes</taxon>
        <taxon>Herpesvirales</taxon>
        <taxon>Orthoherpesviridae</taxon>
        <taxon>Alphaherpesvirinae</taxon>
        <taxon>Simplexvirus</taxon>
        <taxon>Simplexvirus humanalpha2</taxon>
        <taxon>Human herpesvirus 2</taxon>
    </lineage>
</organism>
<reference key="1">
    <citation type="journal article" date="1998" name="J. Virol.">
        <title>The genome sequence of herpes simplex virus type 2.</title>
        <authorList>
            <person name="Dolan A."/>
            <person name="Jamieson F.E."/>
            <person name="Cunningham C."/>
            <person name="Barnett B.C."/>
            <person name="McGeoch D.J."/>
        </authorList>
    </citation>
    <scope>NUCLEOTIDE SEQUENCE [LARGE SCALE GENOMIC DNA]</scope>
</reference>
<dbReference type="EMBL" id="Z86099">
    <property type="protein sequence ID" value="CAB06770.1"/>
    <property type="molecule type" value="Genomic_DNA"/>
</dbReference>
<dbReference type="RefSeq" id="YP_009137161.1">
    <property type="nucleotide sequence ID" value="NC_001798.2"/>
</dbReference>
<dbReference type="SMR" id="P89433"/>
<dbReference type="DNASU" id="1487293"/>
<dbReference type="GeneID" id="1487293"/>
<dbReference type="KEGG" id="vg:1487293"/>
<dbReference type="Proteomes" id="UP000001874">
    <property type="component" value="Segment"/>
</dbReference>
<dbReference type="GO" id="GO:0044175">
    <property type="term" value="C:host cell endosome membrane"/>
    <property type="evidence" value="ECO:0007669"/>
    <property type="project" value="UniProtKB-SubCell"/>
</dbReference>
<dbReference type="GO" id="GO:0044177">
    <property type="term" value="C:host cell Golgi apparatus"/>
    <property type="evidence" value="ECO:0007669"/>
    <property type="project" value="UniProtKB-SubCell"/>
</dbReference>
<dbReference type="GO" id="GO:0044201">
    <property type="term" value="C:host cell nuclear inner membrane"/>
    <property type="evidence" value="ECO:0007669"/>
    <property type="project" value="UniProtKB-SubCell"/>
</dbReference>
<dbReference type="GO" id="GO:0016020">
    <property type="term" value="C:membrane"/>
    <property type="evidence" value="ECO:0007669"/>
    <property type="project" value="UniProtKB-KW"/>
</dbReference>
<dbReference type="GO" id="GO:0019031">
    <property type="term" value="C:viral envelope"/>
    <property type="evidence" value="ECO:0007669"/>
    <property type="project" value="UniProtKB-KW"/>
</dbReference>
<dbReference type="GO" id="GO:0055036">
    <property type="term" value="C:virion membrane"/>
    <property type="evidence" value="ECO:0007669"/>
    <property type="project" value="UniProtKB-SubCell"/>
</dbReference>
<dbReference type="HAMAP" id="MF_04035">
    <property type="entry name" value="HSV_GM"/>
    <property type="match status" value="1"/>
</dbReference>
<dbReference type="InterPro" id="IPR000785">
    <property type="entry name" value="Herpes_glycop_M"/>
</dbReference>
<dbReference type="Pfam" id="PF01528">
    <property type="entry name" value="Herpes_glycop"/>
    <property type="match status" value="1"/>
</dbReference>
<dbReference type="PRINTS" id="PR00333">
    <property type="entry name" value="HSVINTEGRLMP"/>
</dbReference>
<gene>
    <name evidence="1" type="primary">gM</name>
    <name type="ORF">UL10</name>
</gene>
<accession>P89433</accession>
<keyword id="KW-1015">Disulfide bond</keyword>
<keyword id="KW-0325">Glycoprotein</keyword>
<keyword id="KW-1039">Host endosome</keyword>
<keyword id="KW-1040">Host Golgi apparatus</keyword>
<keyword id="KW-1043">Host membrane</keyword>
<keyword id="KW-1048">Host nucleus</keyword>
<keyword id="KW-0472">Membrane</keyword>
<keyword id="KW-1185">Reference proteome</keyword>
<keyword id="KW-0812">Transmembrane</keyword>
<keyword id="KW-1133">Transmembrane helix</keyword>
<keyword id="KW-0261">Viral envelope protein</keyword>
<keyword id="KW-0946">Virion</keyword>
<proteinExistence type="inferred from homology"/>
<protein>
    <recommendedName>
        <fullName evidence="1">Envelope glycoprotein M</fullName>
        <shortName evidence="1">gM</shortName>
    </recommendedName>
</protein>
<name>GM_HHV2H</name>
<organismHost>
    <name type="scientific">Homo sapiens</name>
    <name type="common">Human</name>
    <dbReference type="NCBI Taxonomy" id="9606"/>
</organismHost>
<comment type="function">
    <text evidence="1">Envelope glycoprotein important for virion assembly and egress. Plays a role in the correct incorporation of gH-gL into virion membrane. Directs the glycoprotein N (gN) to the host trans-Golgi network.</text>
</comment>
<comment type="subunit">
    <text evidence="1">Interacts (via N-terminus) with gN (via N-terminus). The gM-gN heterodimer forms the gCII complex.</text>
</comment>
<comment type="subcellular location">
    <subcellularLocation>
        <location evidence="1">Virion membrane</location>
        <topology evidence="1">Multi-pass membrane protein</topology>
    </subcellularLocation>
    <subcellularLocation>
        <location evidence="1">Host Golgi apparatus</location>
        <location evidence="1">Host trans-Golgi network</location>
    </subcellularLocation>
    <subcellularLocation>
        <location evidence="1">Host endosome membrane</location>
        <topology evidence="1">Multi-pass membrane protein</topology>
    </subcellularLocation>
    <subcellularLocation>
        <location evidence="1">Host nucleus inner membrane</location>
        <topology evidence="1">Multi-pass membrane protein</topology>
    </subcellularLocation>
    <text evidence="1">During virion morphogenesis, this protein accumulates in the trans-Golgi network where secondary envelopment occurs.</text>
</comment>
<comment type="similarity">
    <text evidence="1">Belongs to the herpesviridae glycoprotein M family.</text>
</comment>
<feature type="chain" id="PRO_0000385481" description="Envelope glycoprotein M">
    <location>
        <begin position="1"/>
        <end position="467"/>
    </location>
</feature>
<feature type="topological domain" description="Intravirion" evidence="1">
    <location>
        <begin position="1"/>
        <end position="32"/>
    </location>
</feature>
<feature type="transmembrane region" description="Helical" evidence="1">
    <location>
        <begin position="33"/>
        <end position="53"/>
    </location>
</feature>
<feature type="topological domain" description="Virion surface" evidence="1">
    <location>
        <begin position="54"/>
        <end position="90"/>
    </location>
</feature>
<feature type="transmembrane region" description="Helical" evidence="1">
    <location>
        <begin position="91"/>
        <end position="111"/>
    </location>
</feature>
<feature type="topological domain" description="Intravirion" evidence="1">
    <location>
        <begin position="112"/>
        <end position="137"/>
    </location>
</feature>
<feature type="transmembrane region" description="Helical" evidence="1">
    <location>
        <begin position="138"/>
        <end position="158"/>
    </location>
</feature>
<feature type="topological domain" description="Virion surface" evidence="1">
    <location>
        <begin position="159"/>
        <end position="163"/>
    </location>
</feature>
<feature type="transmembrane region" description="Helical" evidence="1">
    <location>
        <begin position="164"/>
        <end position="184"/>
    </location>
</feature>
<feature type="topological domain" description="Intravirion" evidence="1">
    <location>
        <begin position="185"/>
        <end position="220"/>
    </location>
</feature>
<feature type="transmembrane region" description="Helical" evidence="1">
    <location>
        <begin position="221"/>
        <end position="241"/>
    </location>
</feature>
<feature type="topological domain" description="Virion surface" evidence="1">
    <location>
        <begin position="242"/>
        <end position="250"/>
    </location>
</feature>
<feature type="transmembrane region" description="Helical" evidence="1">
    <location>
        <begin position="251"/>
        <end position="271"/>
    </location>
</feature>
<feature type="topological domain" description="Intravirion" evidence="1">
    <location>
        <begin position="272"/>
        <end position="280"/>
    </location>
</feature>
<feature type="transmembrane region" description="Helical" evidence="1">
    <location>
        <begin position="281"/>
        <end position="301"/>
    </location>
</feature>
<feature type="topological domain" description="Virion surface" evidence="1">
    <location>
        <begin position="302"/>
        <end position="318"/>
    </location>
</feature>
<feature type="transmembrane region" description="Helical" evidence="1">
    <location>
        <begin position="319"/>
        <end position="339"/>
    </location>
</feature>
<feature type="topological domain" description="Intravirion" evidence="1">
    <location>
        <begin position="340"/>
        <end position="467"/>
    </location>
</feature>
<feature type="region of interest" description="Disordered" evidence="2">
    <location>
        <begin position="371"/>
        <end position="395"/>
    </location>
</feature>
<feature type="region of interest" description="Disordered" evidence="2">
    <location>
        <begin position="432"/>
        <end position="459"/>
    </location>
</feature>
<feature type="compositionally biased region" description="Basic residues" evidence="2">
    <location>
        <begin position="371"/>
        <end position="381"/>
    </location>
</feature>
<feature type="disulfide bond" description="Interchain (with gN)" evidence="1">
    <location>
        <position position="59"/>
    </location>
</feature>
<evidence type="ECO:0000255" key="1">
    <source>
        <dbReference type="HAMAP-Rule" id="MF_04035"/>
    </source>
</evidence>
<evidence type="ECO:0000256" key="2">
    <source>
        <dbReference type="SAM" id="MobiDB-lite"/>
    </source>
</evidence>
<sequence length="467" mass="50397">MGRRAPRGSPEAAPGADVAPGARAAWWVWCVQVATFIVSAICVVGLLVLASVFRDRFPCLYAPATSYAKANATVEVRGGVAVPLRLDTQSLLATYAITSTLLLAAAVYAAVGAVTSRYERALDAARRLAAARMAMPHATLIAGNVCAWLLQITVLLLAHRISQLAHLIYVLHFACLVYLAAHFCTRGVLSGTYLRQVHGLIDPAPTHHRIVGPVRAVMTNALLLGTLLCTAAAAVSLNTIAALNFNFSAPSMLICLTTLFALLVVSLLLVVEGVLCHYVRVLVGPHLGAIAATGIVGLACEHYHTGGYYVVEQQWPGAQTGVRVALALVAAFALAMAVLRCTRAYLYHRRHHTKFFVRMRDTRHRAHSALRRVRSSMRGSRRGGPPGDPGYAETPYASVSHHAEIDRYGDSDGDPIYDEVAPDHEAELYARVQRPGPVPDAEPIYDTVEGYAPRSAGEPVYSTVRRW</sequence>